<feature type="chain" id="PRO_1000202340" description="3-deoxy-manno-octulosonate cytidylyltransferase">
    <location>
        <begin position="1"/>
        <end position="248"/>
    </location>
</feature>
<comment type="function">
    <text evidence="1">Activates KDO (a required 8-carbon sugar) for incorporation into bacterial lipopolysaccharide in Gram-negative bacteria.</text>
</comment>
<comment type="catalytic activity">
    <reaction evidence="1">
        <text>3-deoxy-alpha-D-manno-oct-2-ulosonate + CTP = CMP-3-deoxy-beta-D-manno-octulosonate + diphosphate</text>
        <dbReference type="Rhea" id="RHEA:23448"/>
        <dbReference type="ChEBI" id="CHEBI:33019"/>
        <dbReference type="ChEBI" id="CHEBI:37563"/>
        <dbReference type="ChEBI" id="CHEBI:85986"/>
        <dbReference type="ChEBI" id="CHEBI:85987"/>
        <dbReference type="EC" id="2.7.7.38"/>
    </reaction>
</comment>
<comment type="pathway">
    <text evidence="1">Nucleotide-sugar biosynthesis; CMP-3-deoxy-D-manno-octulosonate biosynthesis; CMP-3-deoxy-D-manno-octulosonate from 3-deoxy-D-manno-octulosonate and CTP: step 1/1.</text>
</comment>
<comment type="pathway">
    <text evidence="1">Bacterial outer membrane biogenesis; lipopolysaccharide biosynthesis.</text>
</comment>
<comment type="subcellular location">
    <subcellularLocation>
        <location evidence="1">Cytoplasm</location>
    </subcellularLocation>
</comment>
<comment type="similarity">
    <text evidence="1">Belongs to the KdsB family.</text>
</comment>
<proteinExistence type="inferred from homology"/>
<evidence type="ECO:0000255" key="1">
    <source>
        <dbReference type="HAMAP-Rule" id="MF_00057"/>
    </source>
</evidence>
<reference key="1">
    <citation type="journal article" date="2009" name="J. Bacteriol.">
        <title>Genomic sequencing reveals regulatory mutations and recombinational events in the widely used MC4100 lineage of Escherichia coli K-12.</title>
        <authorList>
            <person name="Ferenci T."/>
            <person name="Zhou Z."/>
            <person name="Betteridge T."/>
            <person name="Ren Y."/>
            <person name="Liu Y."/>
            <person name="Feng L."/>
            <person name="Reeves P.R."/>
            <person name="Wang L."/>
        </authorList>
    </citation>
    <scope>NUCLEOTIDE SEQUENCE [LARGE SCALE GENOMIC DNA]</scope>
    <source>
        <strain>K12 / MC4100 / BW2952</strain>
    </source>
</reference>
<organism>
    <name type="scientific">Escherichia coli (strain K12 / MC4100 / BW2952)</name>
    <dbReference type="NCBI Taxonomy" id="595496"/>
    <lineage>
        <taxon>Bacteria</taxon>
        <taxon>Pseudomonadati</taxon>
        <taxon>Pseudomonadota</taxon>
        <taxon>Gammaproteobacteria</taxon>
        <taxon>Enterobacterales</taxon>
        <taxon>Enterobacteriaceae</taxon>
        <taxon>Escherichia</taxon>
    </lineage>
</organism>
<accession>C4ZQ44</accession>
<protein>
    <recommendedName>
        <fullName evidence="1">3-deoxy-manno-octulosonate cytidylyltransferase</fullName>
        <ecNumber evidence="1">2.7.7.38</ecNumber>
    </recommendedName>
    <alternativeName>
        <fullName evidence="1">CMP-2-keto-3-deoxyoctulosonic acid synthase</fullName>
        <shortName evidence="1">CKS</shortName>
        <shortName evidence="1">CMP-KDO synthase</shortName>
    </alternativeName>
</protein>
<sequence>MSFVVIIPARYASTRLPGKPLVDINGKPMIVHVLERARESGAERIIVATDHEDVARAVEAAGGEVCMTRADHQSGTERLAEVVEKCAFSDDTVIVNVQGDEPMIPATIIRQVADNLAQRQVGMATLAVPIHNAEEAFNPNAVKVVLDAEGYALYFSRATIPWDRDRFAEGLETVGDNFLRHLGIYGYRAGFIRRYVNWQPSPLEHIEMLEQLRVLWYGEKIHVAVAQEVPGTGVDTPEDLERVRAEMR</sequence>
<gene>
    <name evidence="1" type="primary">kdsB</name>
    <name type="ordered locus">BWG_0770</name>
</gene>
<dbReference type="EC" id="2.7.7.38" evidence="1"/>
<dbReference type="EMBL" id="CP001396">
    <property type="protein sequence ID" value="ACR61812.1"/>
    <property type="molecule type" value="Genomic_DNA"/>
</dbReference>
<dbReference type="RefSeq" id="WP_000011603.1">
    <property type="nucleotide sequence ID" value="NC_012759.1"/>
</dbReference>
<dbReference type="SMR" id="C4ZQ44"/>
<dbReference type="KEGG" id="ebw:BWG_0770"/>
<dbReference type="HOGENOM" id="CLU_065038_1_0_6"/>
<dbReference type="UniPathway" id="UPA00030"/>
<dbReference type="UniPathway" id="UPA00358">
    <property type="reaction ID" value="UER00476"/>
</dbReference>
<dbReference type="GO" id="GO:0005829">
    <property type="term" value="C:cytosol"/>
    <property type="evidence" value="ECO:0007669"/>
    <property type="project" value="TreeGrafter"/>
</dbReference>
<dbReference type="GO" id="GO:0008690">
    <property type="term" value="F:3-deoxy-manno-octulosonate cytidylyltransferase activity"/>
    <property type="evidence" value="ECO:0007669"/>
    <property type="project" value="UniProtKB-UniRule"/>
</dbReference>
<dbReference type="GO" id="GO:0033468">
    <property type="term" value="P:CMP-keto-3-deoxy-D-manno-octulosonic acid biosynthetic process"/>
    <property type="evidence" value="ECO:0007669"/>
    <property type="project" value="UniProtKB-UniRule"/>
</dbReference>
<dbReference type="GO" id="GO:0009103">
    <property type="term" value="P:lipopolysaccharide biosynthetic process"/>
    <property type="evidence" value="ECO:0007669"/>
    <property type="project" value="UniProtKB-UniRule"/>
</dbReference>
<dbReference type="CDD" id="cd02517">
    <property type="entry name" value="CMP-KDO-Synthetase"/>
    <property type="match status" value="1"/>
</dbReference>
<dbReference type="FunFam" id="3.90.550.10:FF:000011">
    <property type="entry name" value="3-deoxy-manno-octulosonate cytidylyltransferase"/>
    <property type="match status" value="1"/>
</dbReference>
<dbReference type="Gene3D" id="3.90.550.10">
    <property type="entry name" value="Spore Coat Polysaccharide Biosynthesis Protein SpsA, Chain A"/>
    <property type="match status" value="1"/>
</dbReference>
<dbReference type="HAMAP" id="MF_00057">
    <property type="entry name" value="KdsB"/>
    <property type="match status" value="1"/>
</dbReference>
<dbReference type="InterPro" id="IPR003329">
    <property type="entry name" value="Cytidylyl_trans"/>
</dbReference>
<dbReference type="InterPro" id="IPR004528">
    <property type="entry name" value="KdsB"/>
</dbReference>
<dbReference type="InterPro" id="IPR029044">
    <property type="entry name" value="Nucleotide-diphossugar_trans"/>
</dbReference>
<dbReference type="NCBIfam" id="TIGR00466">
    <property type="entry name" value="kdsB"/>
    <property type="match status" value="1"/>
</dbReference>
<dbReference type="NCBIfam" id="NF003950">
    <property type="entry name" value="PRK05450.1-3"/>
    <property type="match status" value="1"/>
</dbReference>
<dbReference type="NCBIfam" id="NF003952">
    <property type="entry name" value="PRK05450.1-5"/>
    <property type="match status" value="1"/>
</dbReference>
<dbReference type="NCBIfam" id="NF009905">
    <property type="entry name" value="PRK13368.1"/>
    <property type="match status" value="1"/>
</dbReference>
<dbReference type="PANTHER" id="PTHR42866">
    <property type="entry name" value="3-DEOXY-MANNO-OCTULOSONATE CYTIDYLYLTRANSFERASE"/>
    <property type="match status" value="1"/>
</dbReference>
<dbReference type="PANTHER" id="PTHR42866:SF2">
    <property type="entry name" value="3-DEOXY-MANNO-OCTULOSONATE CYTIDYLYLTRANSFERASE, MITOCHONDRIAL"/>
    <property type="match status" value="1"/>
</dbReference>
<dbReference type="Pfam" id="PF02348">
    <property type="entry name" value="CTP_transf_3"/>
    <property type="match status" value="1"/>
</dbReference>
<dbReference type="SUPFAM" id="SSF53448">
    <property type="entry name" value="Nucleotide-diphospho-sugar transferases"/>
    <property type="match status" value="1"/>
</dbReference>
<keyword id="KW-0963">Cytoplasm</keyword>
<keyword id="KW-0448">Lipopolysaccharide biosynthesis</keyword>
<keyword id="KW-0548">Nucleotidyltransferase</keyword>
<keyword id="KW-0808">Transferase</keyword>
<name>KDSB_ECOBW</name>